<comment type="function">
    <text evidence="1">One of the proteins required for the normal export of preproteins out of the cell cytoplasm. It is a molecular chaperone that binds to a subset of precursor proteins, maintaining them in a translocation-competent state. It also specifically binds to its receptor SecA.</text>
</comment>
<comment type="subunit">
    <text evidence="1">Homotetramer, a dimer of dimers. One homotetramer interacts with 1 SecA dimer.</text>
</comment>
<comment type="subcellular location">
    <subcellularLocation>
        <location evidence="1">Cytoplasm</location>
    </subcellularLocation>
</comment>
<comment type="similarity">
    <text evidence="1">Belongs to the SecB family.</text>
</comment>
<feature type="chain" id="PRO_0000055363" description="Protein-export protein SecB">
    <location>
        <begin position="1"/>
        <end position="161"/>
    </location>
</feature>
<dbReference type="EMBL" id="AE016828">
    <property type="protein sequence ID" value="AAO91016.1"/>
    <property type="molecule type" value="Genomic_DNA"/>
</dbReference>
<dbReference type="RefSeq" id="NP_820502.1">
    <property type="nucleotide sequence ID" value="NC_002971.4"/>
</dbReference>
<dbReference type="RefSeq" id="WP_005772050.1">
    <property type="nucleotide sequence ID" value="NC_002971.4"/>
</dbReference>
<dbReference type="SMR" id="Q83BI9"/>
<dbReference type="STRING" id="227377.CBU_1519"/>
<dbReference type="DNASU" id="1209429"/>
<dbReference type="EnsemblBacteria" id="AAO91016">
    <property type="protein sequence ID" value="AAO91016"/>
    <property type="gene ID" value="CBU_1519"/>
</dbReference>
<dbReference type="GeneID" id="1209429"/>
<dbReference type="KEGG" id="cbu:CBU_1519"/>
<dbReference type="PATRIC" id="fig|227377.7.peg.1522"/>
<dbReference type="eggNOG" id="COG1952">
    <property type="taxonomic scope" value="Bacteria"/>
</dbReference>
<dbReference type="HOGENOM" id="CLU_111574_1_0_6"/>
<dbReference type="OrthoDB" id="9795145at2"/>
<dbReference type="Proteomes" id="UP000002671">
    <property type="component" value="Chromosome"/>
</dbReference>
<dbReference type="GO" id="GO:0005737">
    <property type="term" value="C:cytoplasm"/>
    <property type="evidence" value="ECO:0007669"/>
    <property type="project" value="UniProtKB-SubCell"/>
</dbReference>
<dbReference type="GO" id="GO:0051082">
    <property type="term" value="F:unfolded protein binding"/>
    <property type="evidence" value="ECO:0007669"/>
    <property type="project" value="InterPro"/>
</dbReference>
<dbReference type="GO" id="GO:0006457">
    <property type="term" value="P:protein folding"/>
    <property type="evidence" value="ECO:0007669"/>
    <property type="project" value="UniProtKB-UniRule"/>
</dbReference>
<dbReference type="GO" id="GO:0051262">
    <property type="term" value="P:protein tetramerization"/>
    <property type="evidence" value="ECO:0007669"/>
    <property type="project" value="InterPro"/>
</dbReference>
<dbReference type="GO" id="GO:0015031">
    <property type="term" value="P:protein transport"/>
    <property type="evidence" value="ECO:0007669"/>
    <property type="project" value="UniProtKB-UniRule"/>
</dbReference>
<dbReference type="Gene3D" id="3.10.420.10">
    <property type="entry name" value="SecB-like"/>
    <property type="match status" value="1"/>
</dbReference>
<dbReference type="HAMAP" id="MF_00821">
    <property type="entry name" value="SecB"/>
    <property type="match status" value="1"/>
</dbReference>
<dbReference type="InterPro" id="IPR003708">
    <property type="entry name" value="SecB"/>
</dbReference>
<dbReference type="InterPro" id="IPR035958">
    <property type="entry name" value="SecB-like_sf"/>
</dbReference>
<dbReference type="NCBIfam" id="NF004393">
    <property type="entry name" value="PRK05751.1-4"/>
    <property type="match status" value="1"/>
</dbReference>
<dbReference type="NCBIfam" id="TIGR00809">
    <property type="entry name" value="secB"/>
    <property type="match status" value="1"/>
</dbReference>
<dbReference type="PANTHER" id="PTHR36918">
    <property type="match status" value="1"/>
</dbReference>
<dbReference type="PANTHER" id="PTHR36918:SF1">
    <property type="entry name" value="PROTEIN-EXPORT PROTEIN SECB"/>
    <property type="match status" value="1"/>
</dbReference>
<dbReference type="Pfam" id="PF02556">
    <property type="entry name" value="SecB"/>
    <property type="match status" value="1"/>
</dbReference>
<dbReference type="PRINTS" id="PR01594">
    <property type="entry name" value="SECBCHAPRONE"/>
</dbReference>
<dbReference type="SUPFAM" id="SSF54611">
    <property type="entry name" value="SecB-like"/>
    <property type="match status" value="1"/>
</dbReference>
<keyword id="KW-0143">Chaperone</keyword>
<keyword id="KW-0963">Cytoplasm</keyword>
<keyword id="KW-0653">Protein transport</keyword>
<keyword id="KW-1185">Reference proteome</keyword>
<keyword id="KW-0811">Translocation</keyword>
<keyword id="KW-0813">Transport</keyword>
<accession>Q83BI9</accession>
<evidence type="ECO:0000255" key="1">
    <source>
        <dbReference type="HAMAP-Rule" id="MF_00821"/>
    </source>
</evidence>
<gene>
    <name evidence="1" type="primary">secB</name>
    <name type="ordered locus">CBU_1519</name>
</gene>
<proteinExistence type="inferred from homology"/>
<reference key="1">
    <citation type="journal article" date="2003" name="Proc. Natl. Acad. Sci. U.S.A.">
        <title>Complete genome sequence of the Q-fever pathogen, Coxiella burnetii.</title>
        <authorList>
            <person name="Seshadri R."/>
            <person name="Paulsen I.T."/>
            <person name="Eisen J.A."/>
            <person name="Read T.D."/>
            <person name="Nelson K.E."/>
            <person name="Nelson W.C."/>
            <person name="Ward N.L."/>
            <person name="Tettelin H."/>
            <person name="Davidsen T.M."/>
            <person name="Beanan M.J."/>
            <person name="DeBoy R.T."/>
            <person name="Daugherty S.C."/>
            <person name="Brinkac L.M."/>
            <person name="Madupu R."/>
            <person name="Dodson R.J."/>
            <person name="Khouri H.M."/>
            <person name="Lee K.H."/>
            <person name="Carty H.A."/>
            <person name="Scanlan D."/>
            <person name="Heinzen R.A."/>
            <person name="Thompson H.A."/>
            <person name="Samuel J.E."/>
            <person name="Fraser C.M."/>
            <person name="Heidelberg J.F."/>
        </authorList>
    </citation>
    <scope>NUCLEOTIDE SEQUENCE [LARGE SCALE GENOMIC DNA]</scope>
    <source>
        <strain>RSA 493 / Nine Mile phase I</strain>
    </source>
</reference>
<name>SECB_COXBU</name>
<sequence length="161" mass="18377">MAEQNQRTNTPDNGPEFAIQRLYIKDLSFEAPRSPQVFLEEWQPELNMDLATKVNDLGEDNHEVVLTVTVTVTMKESHIFLAEVQQGGIFTIKNFPKEEMRPMLGSFCPNILYPYAREAITDMVVRGGFPQLYLAPVNFDALFEQHEQSEEGNSGTEDRVH</sequence>
<protein>
    <recommendedName>
        <fullName evidence="1">Protein-export protein SecB</fullName>
    </recommendedName>
</protein>
<organism>
    <name type="scientific">Coxiella burnetii (strain RSA 493 / Nine Mile phase I)</name>
    <dbReference type="NCBI Taxonomy" id="227377"/>
    <lineage>
        <taxon>Bacteria</taxon>
        <taxon>Pseudomonadati</taxon>
        <taxon>Pseudomonadota</taxon>
        <taxon>Gammaproteobacteria</taxon>
        <taxon>Legionellales</taxon>
        <taxon>Coxiellaceae</taxon>
        <taxon>Coxiella</taxon>
    </lineage>
</organism>